<comment type="function">
    <text evidence="1">One of the early assembly proteins it binds 23S rRNA. One of the proteins that surrounds the polypeptide exit tunnel on the outside of the ribosome. Forms the main docking site for trigger factor binding to the ribosome.</text>
</comment>
<comment type="subunit">
    <text evidence="1">Part of the 50S ribosomal subunit. Contacts protein L29, and trigger factor when it is bound to the ribosome.</text>
</comment>
<comment type="similarity">
    <text evidence="1">Belongs to the universal ribosomal protein uL23 family.</text>
</comment>
<protein>
    <recommendedName>
        <fullName evidence="1">Large ribosomal subunit protein uL23</fullName>
    </recommendedName>
    <alternativeName>
        <fullName evidence="2">50S ribosomal protein L23</fullName>
    </alternativeName>
</protein>
<accession>Q3IF23</accession>
<dbReference type="EMBL" id="CR954246">
    <property type="protein sequence ID" value="CAI85250.1"/>
    <property type="molecule type" value="Genomic_DNA"/>
</dbReference>
<dbReference type="SMR" id="Q3IF23"/>
<dbReference type="STRING" id="326442.PSHAa0146"/>
<dbReference type="KEGG" id="pha:PSHAa0146"/>
<dbReference type="eggNOG" id="COG0089">
    <property type="taxonomic scope" value="Bacteria"/>
</dbReference>
<dbReference type="HOGENOM" id="CLU_037562_3_1_6"/>
<dbReference type="BioCyc" id="PHAL326442:PSHA_RS00745-MONOMER"/>
<dbReference type="Proteomes" id="UP000006843">
    <property type="component" value="Chromosome I"/>
</dbReference>
<dbReference type="GO" id="GO:1990904">
    <property type="term" value="C:ribonucleoprotein complex"/>
    <property type="evidence" value="ECO:0007669"/>
    <property type="project" value="UniProtKB-KW"/>
</dbReference>
<dbReference type="GO" id="GO:0005840">
    <property type="term" value="C:ribosome"/>
    <property type="evidence" value="ECO:0007669"/>
    <property type="project" value="UniProtKB-KW"/>
</dbReference>
<dbReference type="GO" id="GO:0019843">
    <property type="term" value="F:rRNA binding"/>
    <property type="evidence" value="ECO:0007669"/>
    <property type="project" value="UniProtKB-UniRule"/>
</dbReference>
<dbReference type="GO" id="GO:0003735">
    <property type="term" value="F:structural constituent of ribosome"/>
    <property type="evidence" value="ECO:0007669"/>
    <property type="project" value="InterPro"/>
</dbReference>
<dbReference type="GO" id="GO:0006412">
    <property type="term" value="P:translation"/>
    <property type="evidence" value="ECO:0007669"/>
    <property type="project" value="UniProtKB-UniRule"/>
</dbReference>
<dbReference type="FunFam" id="3.30.70.330:FF:000001">
    <property type="entry name" value="50S ribosomal protein L23"/>
    <property type="match status" value="1"/>
</dbReference>
<dbReference type="Gene3D" id="3.30.70.330">
    <property type="match status" value="1"/>
</dbReference>
<dbReference type="HAMAP" id="MF_01369_B">
    <property type="entry name" value="Ribosomal_uL23_B"/>
    <property type="match status" value="1"/>
</dbReference>
<dbReference type="InterPro" id="IPR012677">
    <property type="entry name" value="Nucleotide-bd_a/b_plait_sf"/>
</dbReference>
<dbReference type="InterPro" id="IPR013025">
    <property type="entry name" value="Ribosomal_uL23-like"/>
</dbReference>
<dbReference type="InterPro" id="IPR012678">
    <property type="entry name" value="Ribosomal_uL23/eL15/eS24_sf"/>
</dbReference>
<dbReference type="InterPro" id="IPR001014">
    <property type="entry name" value="Ribosomal_uL23_CS"/>
</dbReference>
<dbReference type="NCBIfam" id="NF004358">
    <property type="entry name" value="PRK05738.1-1"/>
    <property type="match status" value="1"/>
</dbReference>
<dbReference type="NCBIfam" id="NF004359">
    <property type="entry name" value="PRK05738.1-3"/>
    <property type="match status" value="1"/>
</dbReference>
<dbReference type="NCBIfam" id="NF004363">
    <property type="entry name" value="PRK05738.2-4"/>
    <property type="match status" value="1"/>
</dbReference>
<dbReference type="NCBIfam" id="NF004366">
    <property type="entry name" value="PRK05738.3-2"/>
    <property type="match status" value="1"/>
</dbReference>
<dbReference type="PANTHER" id="PTHR11620">
    <property type="entry name" value="60S RIBOSOMAL PROTEIN L23A"/>
    <property type="match status" value="1"/>
</dbReference>
<dbReference type="Pfam" id="PF00276">
    <property type="entry name" value="Ribosomal_L23"/>
    <property type="match status" value="1"/>
</dbReference>
<dbReference type="SUPFAM" id="SSF54189">
    <property type="entry name" value="Ribosomal proteins S24e, L23 and L15e"/>
    <property type="match status" value="1"/>
</dbReference>
<dbReference type="PROSITE" id="PS00050">
    <property type="entry name" value="RIBOSOMAL_L23"/>
    <property type="match status" value="1"/>
</dbReference>
<gene>
    <name evidence="1" type="primary">rplW</name>
    <name type="ordered locus">PSHAa0146</name>
</gene>
<sequence>MIREERLLKVIVAPHISEKSTIAAEENNTIVFKVAKDSTKAEVKAAVEKLFEVEVTGVRTLNVKGKTKRTGARFGRRNDWKKAYVTLKEGSELDFVGGAE</sequence>
<keyword id="KW-1185">Reference proteome</keyword>
<keyword id="KW-0687">Ribonucleoprotein</keyword>
<keyword id="KW-0689">Ribosomal protein</keyword>
<keyword id="KW-0694">RNA-binding</keyword>
<keyword id="KW-0699">rRNA-binding</keyword>
<organism>
    <name type="scientific">Pseudoalteromonas translucida (strain TAC 125)</name>
    <dbReference type="NCBI Taxonomy" id="326442"/>
    <lineage>
        <taxon>Bacteria</taxon>
        <taxon>Pseudomonadati</taxon>
        <taxon>Pseudomonadota</taxon>
        <taxon>Gammaproteobacteria</taxon>
        <taxon>Alteromonadales</taxon>
        <taxon>Pseudoalteromonadaceae</taxon>
        <taxon>Pseudoalteromonas</taxon>
    </lineage>
</organism>
<proteinExistence type="inferred from homology"/>
<name>RL23_PSET1</name>
<reference key="1">
    <citation type="journal article" date="2005" name="Genome Res.">
        <title>Coping with cold: the genome of the versatile marine Antarctica bacterium Pseudoalteromonas haloplanktis TAC125.</title>
        <authorList>
            <person name="Medigue C."/>
            <person name="Krin E."/>
            <person name="Pascal G."/>
            <person name="Barbe V."/>
            <person name="Bernsel A."/>
            <person name="Bertin P.N."/>
            <person name="Cheung F."/>
            <person name="Cruveiller S."/>
            <person name="D'Amico S."/>
            <person name="Duilio A."/>
            <person name="Fang G."/>
            <person name="Feller G."/>
            <person name="Ho C."/>
            <person name="Mangenot S."/>
            <person name="Marino G."/>
            <person name="Nilsson J."/>
            <person name="Parrilli E."/>
            <person name="Rocha E.P.C."/>
            <person name="Rouy Z."/>
            <person name="Sekowska A."/>
            <person name="Tutino M.L."/>
            <person name="Vallenet D."/>
            <person name="von Heijne G."/>
            <person name="Danchin A."/>
        </authorList>
    </citation>
    <scope>NUCLEOTIDE SEQUENCE [LARGE SCALE GENOMIC DNA]</scope>
    <source>
        <strain>TAC 125</strain>
    </source>
</reference>
<evidence type="ECO:0000255" key="1">
    <source>
        <dbReference type="HAMAP-Rule" id="MF_01369"/>
    </source>
</evidence>
<evidence type="ECO:0000305" key="2"/>
<feature type="chain" id="PRO_0000272803" description="Large ribosomal subunit protein uL23">
    <location>
        <begin position="1"/>
        <end position="100"/>
    </location>
</feature>